<feature type="chain" id="PRO_0000220608" description="Uncharacterized protein At4g00950">
    <location>
        <begin position="1"/>
        <end position="291"/>
    </location>
</feature>
<feature type="region of interest" description="Disordered" evidence="1">
    <location>
        <begin position="1"/>
        <end position="82"/>
    </location>
</feature>
<feature type="compositionally biased region" description="Low complexity" evidence="1">
    <location>
        <begin position="28"/>
        <end position="43"/>
    </location>
</feature>
<feature type="compositionally biased region" description="Low complexity" evidence="1">
    <location>
        <begin position="59"/>
        <end position="78"/>
    </location>
</feature>
<sequence length="291" mass="32168">MEAEKETEQEGNLTVMKLPVLPTKPNTHSHSMSSPIHSSISASVPFSWEEEPGKPKQHSTSSSSSSSSSPLTSYSSSPFETHKSLELPPRLHLLEKDGGSVTKLHSPITVFDGPYSMTTSKRMDSPSFRMMVKGSADCYGSFRSDIDGDLEDLEVGSKQQENLSSGSLAVVKKRGRLGFFGFRRRRALKGKTEFGRGSYVFPSSVDRESEYSRKEEEEEKEDKRFGYDDTDGISCSQSSRFCDVKISSISRTGSFSTLPAPPSSSSKSHFWTNVYAGLKQVVPWKSKKTTV</sequence>
<name>Y4095_ARATH</name>
<proteinExistence type="evidence at transcript level"/>
<evidence type="ECO:0000256" key="1">
    <source>
        <dbReference type="SAM" id="MobiDB-lite"/>
    </source>
</evidence>
<evidence type="ECO:0000305" key="2"/>
<protein>
    <recommendedName>
        <fullName>Uncharacterized protein At4g00950</fullName>
    </recommendedName>
</protein>
<comment type="sequence caution" evidence="2">
    <conflict type="erroneous gene model prediction">
        <sequence resource="EMBL-CDS" id="AAB62848"/>
    </conflict>
    <text>The predicted gene At4g00940 has been split into 2 genes: At4g00940 and At4g00950.</text>
</comment>
<keyword id="KW-1185">Reference proteome</keyword>
<accession>Q9M160</accession>
<accession>O23083</accession>
<dbReference type="EMBL" id="AF013294">
    <property type="protein sequence ID" value="AAB62848.1"/>
    <property type="status" value="ALT_SEQ"/>
    <property type="molecule type" value="Genomic_DNA"/>
</dbReference>
<dbReference type="EMBL" id="AL161491">
    <property type="protein sequence ID" value="CAB80904.1"/>
    <property type="molecule type" value="Genomic_DNA"/>
</dbReference>
<dbReference type="EMBL" id="CP002687">
    <property type="protein sequence ID" value="AEE81959.1"/>
    <property type="molecule type" value="Genomic_DNA"/>
</dbReference>
<dbReference type="EMBL" id="AY065223">
    <property type="protein sequence ID" value="AAL38699.1"/>
    <property type="molecule type" value="mRNA"/>
</dbReference>
<dbReference type="EMBL" id="AY142586">
    <property type="protein sequence ID" value="AAN13155.1"/>
    <property type="molecule type" value="mRNA"/>
</dbReference>
<dbReference type="PIR" id="T01552">
    <property type="entry name" value="T01552"/>
</dbReference>
<dbReference type="RefSeq" id="NP_192004.1">
    <property type="nucleotide sequence ID" value="NM_116322.5"/>
</dbReference>
<dbReference type="FunCoup" id="Q9M160">
    <property type="interactions" value="32"/>
</dbReference>
<dbReference type="STRING" id="3702.Q9M160"/>
<dbReference type="iPTMnet" id="Q9M160"/>
<dbReference type="PaxDb" id="3702-AT4G00950.1"/>
<dbReference type="ProteomicsDB" id="242914"/>
<dbReference type="EnsemblPlants" id="AT4G00950.1">
    <property type="protein sequence ID" value="AT4G00950.1"/>
    <property type="gene ID" value="AT4G00950"/>
</dbReference>
<dbReference type="GeneID" id="827948"/>
<dbReference type="Gramene" id="AT4G00950.1">
    <property type="protein sequence ID" value="AT4G00950.1"/>
    <property type="gene ID" value="AT4G00950"/>
</dbReference>
<dbReference type="KEGG" id="ath:AT4G00950"/>
<dbReference type="Araport" id="AT4G00950"/>
<dbReference type="TAIR" id="AT4G00950">
    <property type="gene designation" value="MEE47"/>
</dbReference>
<dbReference type="eggNOG" id="ENOG502RXG5">
    <property type="taxonomic scope" value="Eukaryota"/>
</dbReference>
<dbReference type="HOGENOM" id="CLU_089791_0_0_1"/>
<dbReference type="InParanoid" id="Q9M160"/>
<dbReference type="OMA" id="VWTSICE"/>
<dbReference type="PhylomeDB" id="Q9M160"/>
<dbReference type="PRO" id="PR:Q9M160"/>
<dbReference type="Proteomes" id="UP000006548">
    <property type="component" value="Chromosome 4"/>
</dbReference>
<dbReference type="ExpressionAtlas" id="Q9M160">
    <property type="expression patterns" value="baseline and differential"/>
</dbReference>
<dbReference type="GO" id="GO:0003700">
    <property type="term" value="F:DNA-binding transcription factor activity"/>
    <property type="evidence" value="ECO:0000250"/>
    <property type="project" value="TAIR"/>
</dbReference>
<dbReference type="GO" id="GO:0009793">
    <property type="term" value="P:embryo development ending in seed dormancy"/>
    <property type="evidence" value="ECO:0000315"/>
    <property type="project" value="TAIR"/>
</dbReference>
<dbReference type="GO" id="GO:0006355">
    <property type="term" value="P:regulation of DNA-templated transcription"/>
    <property type="evidence" value="ECO:0000304"/>
    <property type="project" value="TAIR"/>
</dbReference>
<dbReference type="InterPro" id="IPR007789">
    <property type="entry name" value="DUF688"/>
</dbReference>
<dbReference type="PANTHER" id="PTHR34371:SF2">
    <property type="entry name" value="DUF688 FAMILY PROTEIN"/>
    <property type="match status" value="1"/>
</dbReference>
<dbReference type="PANTHER" id="PTHR34371">
    <property type="entry name" value="OS01G0551000 PROTEIN"/>
    <property type="match status" value="1"/>
</dbReference>
<dbReference type="Pfam" id="PF05097">
    <property type="entry name" value="DUF688"/>
    <property type="match status" value="1"/>
</dbReference>
<reference key="1">
    <citation type="journal article" date="1999" name="Nature">
        <title>Sequence and analysis of chromosome 4 of the plant Arabidopsis thaliana.</title>
        <authorList>
            <person name="Mayer K.F.X."/>
            <person name="Schueller C."/>
            <person name="Wambutt R."/>
            <person name="Murphy G."/>
            <person name="Volckaert G."/>
            <person name="Pohl T."/>
            <person name="Duesterhoeft A."/>
            <person name="Stiekema W."/>
            <person name="Entian K.-D."/>
            <person name="Terryn N."/>
            <person name="Harris B."/>
            <person name="Ansorge W."/>
            <person name="Brandt P."/>
            <person name="Grivell L.A."/>
            <person name="Rieger M."/>
            <person name="Weichselgartner M."/>
            <person name="de Simone V."/>
            <person name="Obermaier B."/>
            <person name="Mache R."/>
            <person name="Mueller M."/>
            <person name="Kreis M."/>
            <person name="Delseny M."/>
            <person name="Puigdomenech P."/>
            <person name="Watson M."/>
            <person name="Schmidtheini T."/>
            <person name="Reichert B."/>
            <person name="Portetelle D."/>
            <person name="Perez-Alonso M."/>
            <person name="Boutry M."/>
            <person name="Bancroft I."/>
            <person name="Vos P."/>
            <person name="Hoheisel J."/>
            <person name="Zimmermann W."/>
            <person name="Wedler H."/>
            <person name="Ridley P."/>
            <person name="Langham S.-A."/>
            <person name="McCullagh B."/>
            <person name="Bilham L."/>
            <person name="Robben J."/>
            <person name="van der Schueren J."/>
            <person name="Grymonprez B."/>
            <person name="Chuang Y.-J."/>
            <person name="Vandenbussche F."/>
            <person name="Braeken M."/>
            <person name="Weltjens I."/>
            <person name="Voet M."/>
            <person name="Bastiaens I."/>
            <person name="Aert R."/>
            <person name="Defoor E."/>
            <person name="Weitzenegger T."/>
            <person name="Bothe G."/>
            <person name="Ramsperger U."/>
            <person name="Hilbert H."/>
            <person name="Braun M."/>
            <person name="Holzer E."/>
            <person name="Brandt A."/>
            <person name="Peters S."/>
            <person name="van Staveren M."/>
            <person name="Dirkse W."/>
            <person name="Mooijman P."/>
            <person name="Klein Lankhorst R."/>
            <person name="Rose M."/>
            <person name="Hauf J."/>
            <person name="Koetter P."/>
            <person name="Berneiser S."/>
            <person name="Hempel S."/>
            <person name="Feldpausch M."/>
            <person name="Lamberth S."/>
            <person name="Van den Daele H."/>
            <person name="De Keyser A."/>
            <person name="Buysshaert C."/>
            <person name="Gielen J."/>
            <person name="Villarroel R."/>
            <person name="De Clercq R."/>
            <person name="van Montagu M."/>
            <person name="Rogers J."/>
            <person name="Cronin A."/>
            <person name="Quail M.A."/>
            <person name="Bray-Allen S."/>
            <person name="Clark L."/>
            <person name="Doggett J."/>
            <person name="Hall S."/>
            <person name="Kay M."/>
            <person name="Lennard N."/>
            <person name="McLay K."/>
            <person name="Mayes R."/>
            <person name="Pettett A."/>
            <person name="Rajandream M.A."/>
            <person name="Lyne M."/>
            <person name="Benes V."/>
            <person name="Rechmann S."/>
            <person name="Borkova D."/>
            <person name="Bloecker H."/>
            <person name="Scharfe M."/>
            <person name="Grimm M."/>
            <person name="Loehnert T.-H."/>
            <person name="Dose S."/>
            <person name="de Haan M."/>
            <person name="Maarse A.C."/>
            <person name="Schaefer M."/>
            <person name="Mueller-Auer S."/>
            <person name="Gabel C."/>
            <person name="Fuchs M."/>
            <person name="Fartmann B."/>
            <person name="Granderath K."/>
            <person name="Dauner D."/>
            <person name="Herzl A."/>
            <person name="Neumann S."/>
            <person name="Argiriou A."/>
            <person name="Vitale D."/>
            <person name="Liguori R."/>
            <person name="Piravandi E."/>
            <person name="Massenet O."/>
            <person name="Quigley F."/>
            <person name="Clabauld G."/>
            <person name="Muendlein A."/>
            <person name="Felber R."/>
            <person name="Schnabl S."/>
            <person name="Hiller R."/>
            <person name="Schmidt W."/>
            <person name="Lecharny A."/>
            <person name="Aubourg S."/>
            <person name="Chefdor F."/>
            <person name="Cooke R."/>
            <person name="Berger C."/>
            <person name="Monfort A."/>
            <person name="Casacuberta E."/>
            <person name="Gibbons T."/>
            <person name="Weber N."/>
            <person name="Vandenbol M."/>
            <person name="Bargues M."/>
            <person name="Terol J."/>
            <person name="Torres A."/>
            <person name="Perez-Perez A."/>
            <person name="Purnelle B."/>
            <person name="Bent E."/>
            <person name="Johnson S."/>
            <person name="Tacon D."/>
            <person name="Jesse T."/>
            <person name="Heijnen L."/>
            <person name="Schwarz S."/>
            <person name="Scholler P."/>
            <person name="Heber S."/>
            <person name="Francs P."/>
            <person name="Bielke C."/>
            <person name="Frishman D."/>
            <person name="Haase D."/>
            <person name="Lemcke K."/>
            <person name="Mewes H.-W."/>
            <person name="Stocker S."/>
            <person name="Zaccaria P."/>
            <person name="Bevan M."/>
            <person name="Wilson R.K."/>
            <person name="de la Bastide M."/>
            <person name="Habermann K."/>
            <person name="Parnell L."/>
            <person name="Dedhia N."/>
            <person name="Gnoj L."/>
            <person name="Schutz K."/>
            <person name="Huang E."/>
            <person name="Spiegel L."/>
            <person name="Sekhon M."/>
            <person name="Murray J."/>
            <person name="Sheet P."/>
            <person name="Cordes M."/>
            <person name="Abu-Threideh J."/>
            <person name="Stoneking T."/>
            <person name="Kalicki J."/>
            <person name="Graves T."/>
            <person name="Harmon G."/>
            <person name="Edwards J."/>
            <person name="Latreille P."/>
            <person name="Courtney L."/>
            <person name="Cloud J."/>
            <person name="Abbott A."/>
            <person name="Scott K."/>
            <person name="Johnson D."/>
            <person name="Minx P."/>
            <person name="Bentley D."/>
            <person name="Fulton B."/>
            <person name="Miller N."/>
            <person name="Greco T."/>
            <person name="Kemp K."/>
            <person name="Kramer J."/>
            <person name="Fulton L."/>
            <person name="Mardis E."/>
            <person name="Dante M."/>
            <person name="Pepin K."/>
            <person name="Hillier L.W."/>
            <person name="Nelson J."/>
            <person name="Spieth J."/>
            <person name="Ryan E."/>
            <person name="Andrews S."/>
            <person name="Geisel C."/>
            <person name="Layman D."/>
            <person name="Du H."/>
            <person name="Ali J."/>
            <person name="Berghoff A."/>
            <person name="Jones K."/>
            <person name="Drone K."/>
            <person name="Cotton M."/>
            <person name="Joshu C."/>
            <person name="Antonoiu B."/>
            <person name="Zidanic M."/>
            <person name="Strong C."/>
            <person name="Sun H."/>
            <person name="Lamar B."/>
            <person name="Yordan C."/>
            <person name="Ma P."/>
            <person name="Zhong J."/>
            <person name="Preston R."/>
            <person name="Vil D."/>
            <person name="Shekher M."/>
            <person name="Matero A."/>
            <person name="Shah R."/>
            <person name="Swaby I.K."/>
            <person name="O'Shaughnessy A."/>
            <person name="Rodriguez M."/>
            <person name="Hoffman J."/>
            <person name="Till S."/>
            <person name="Granat S."/>
            <person name="Shohdy N."/>
            <person name="Hasegawa A."/>
            <person name="Hameed A."/>
            <person name="Lodhi M."/>
            <person name="Johnson A."/>
            <person name="Chen E."/>
            <person name="Marra M.A."/>
            <person name="Martienssen R."/>
            <person name="McCombie W.R."/>
        </authorList>
    </citation>
    <scope>NUCLEOTIDE SEQUENCE [LARGE SCALE GENOMIC DNA]</scope>
    <source>
        <strain>cv. Columbia</strain>
    </source>
</reference>
<reference key="2">
    <citation type="journal article" date="2017" name="Plant J.">
        <title>Araport11: a complete reannotation of the Arabidopsis thaliana reference genome.</title>
        <authorList>
            <person name="Cheng C.Y."/>
            <person name="Krishnakumar V."/>
            <person name="Chan A.P."/>
            <person name="Thibaud-Nissen F."/>
            <person name="Schobel S."/>
            <person name="Town C.D."/>
        </authorList>
    </citation>
    <scope>GENOME REANNOTATION</scope>
    <source>
        <strain>cv. Columbia</strain>
    </source>
</reference>
<reference key="3">
    <citation type="journal article" date="2003" name="Science">
        <title>Empirical analysis of transcriptional activity in the Arabidopsis genome.</title>
        <authorList>
            <person name="Yamada K."/>
            <person name="Lim J."/>
            <person name="Dale J.M."/>
            <person name="Chen H."/>
            <person name="Shinn P."/>
            <person name="Palm C.J."/>
            <person name="Southwick A.M."/>
            <person name="Wu H.C."/>
            <person name="Kim C.J."/>
            <person name="Nguyen M."/>
            <person name="Pham P.K."/>
            <person name="Cheuk R.F."/>
            <person name="Karlin-Newmann G."/>
            <person name="Liu S.X."/>
            <person name="Lam B."/>
            <person name="Sakano H."/>
            <person name="Wu T."/>
            <person name="Yu G."/>
            <person name="Miranda M."/>
            <person name="Quach H.L."/>
            <person name="Tripp M."/>
            <person name="Chang C.H."/>
            <person name="Lee J.M."/>
            <person name="Toriumi M.J."/>
            <person name="Chan M.M."/>
            <person name="Tang C.C."/>
            <person name="Onodera C.S."/>
            <person name="Deng J.M."/>
            <person name="Akiyama K."/>
            <person name="Ansari Y."/>
            <person name="Arakawa T."/>
            <person name="Banh J."/>
            <person name="Banno F."/>
            <person name="Bowser L."/>
            <person name="Brooks S.Y."/>
            <person name="Carninci P."/>
            <person name="Chao Q."/>
            <person name="Choy N."/>
            <person name="Enju A."/>
            <person name="Goldsmith A.D."/>
            <person name="Gurjal M."/>
            <person name="Hansen N.F."/>
            <person name="Hayashizaki Y."/>
            <person name="Johnson-Hopson C."/>
            <person name="Hsuan V.W."/>
            <person name="Iida K."/>
            <person name="Karnes M."/>
            <person name="Khan S."/>
            <person name="Koesema E."/>
            <person name="Ishida J."/>
            <person name="Jiang P.X."/>
            <person name="Jones T."/>
            <person name="Kawai J."/>
            <person name="Kamiya A."/>
            <person name="Meyers C."/>
            <person name="Nakajima M."/>
            <person name="Narusaka M."/>
            <person name="Seki M."/>
            <person name="Sakurai T."/>
            <person name="Satou M."/>
            <person name="Tamse R."/>
            <person name="Vaysberg M."/>
            <person name="Wallender E.K."/>
            <person name="Wong C."/>
            <person name="Yamamura Y."/>
            <person name="Yuan S."/>
            <person name="Shinozaki K."/>
            <person name="Davis R.W."/>
            <person name="Theologis A."/>
            <person name="Ecker J.R."/>
        </authorList>
    </citation>
    <scope>NUCLEOTIDE SEQUENCE [LARGE SCALE MRNA]</scope>
    <source>
        <strain>cv. Columbia</strain>
    </source>
</reference>
<gene>
    <name type="ordered locus">At4g00950</name>
    <name type="ORF">A_TM018A10.2</name>
    <name type="ORF">T18A10.4</name>
</gene>
<organism>
    <name type="scientific">Arabidopsis thaliana</name>
    <name type="common">Mouse-ear cress</name>
    <dbReference type="NCBI Taxonomy" id="3702"/>
    <lineage>
        <taxon>Eukaryota</taxon>
        <taxon>Viridiplantae</taxon>
        <taxon>Streptophyta</taxon>
        <taxon>Embryophyta</taxon>
        <taxon>Tracheophyta</taxon>
        <taxon>Spermatophyta</taxon>
        <taxon>Magnoliopsida</taxon>
        <taxon>eudicotyledons</taxon>
        <taxon>Gunneridae</taxon>
        <taxon>Pentapetalae</taxon>
        <taxon>rosids</taxon>
        <taxon>malvids</taxon>
        <taxon>Brassicales</taxon>
        <taxon>Brassicaceae</taxon>
        <taxon>Camelineae</taxon>
        <taxon>Arabidopsis</taxon>
    </lineage>
</organism>